<sequence length="341" mass="36153">MAANKREPKVVVLGGGSWGTTVASICARRGPTLQWVRSAVTAQDINDNHRNSRYLGNDVVLSDTLRATTDFTEAANCADVVVMGVPSHGFRGVLVELSKELRPWVPVVSLVKGLEQGTNMRMSQIIEEVLPGHPAGILAGPNIAREVAEGYAAAAVLAMPDQHLATRLSAMFRTRRFRVYTTDDVVGVETAGALKNVFAIAVGMGYSLGIGENTRALVIARALREMTKLGVAMGGKSETFPGLAGLGDLIVTCTSQRSRNRHVGEQLGAGKPIDEIIASMSQVAEGVKAAGVVMEFANEFGLNMPIAREVDAVINHGSTVEQAYRGLIAEVPGHEVHGSGF</sequence>
<protein>
    <recommendedName>
        <fullName evidence="1">Glycerol-3-phosphate dehydrogenase [NAD(P)+] 1</fullName>
        <ecNumber evidence="1">1.1.1.94</ecNumber>
    </recommendedName>
    <alternativeName>
        <fullName evidence="1">NAD(P)(+)-dependent glycerol-3-phosphate dehydrogenase 1</fullName>
    </alternativeName>
    <alternativeName>
        <fullName evidence="1">NAD(P)H-dependent dihydroxyacetone-phosphate reductase 1</fullName>
    </alternativeName>
</protein>
<reference key="1">
    <citation type="journal article" date="2003" name="Proc. Natl. Acad. Sci. U.S.A.">
        <title>The complete genome sequence of Mycobacterium bovis.</title>
        <authorList>
            <person name="Garnier T."/>
            <person name="Eiglmeier K."/>
            <person name="Camus J.-C."/>
            <person name="Medina N."/>
            <person name="Mansoor H."/>
            <person name="Pryor M."/>
            <person name="Duthoy S."/>
            <person name="Grondin S."/>
            <person name="Lacroix C."/>
            <person name="Monsempe C."/>
            <person name="Simon S."/>
            <person name="Harris B."/>
            <person name="Atkin R."/>
            <person name="Doggett J."/>
            <person name="Mayes R."/>
            <person name="Keating L."/>
            <person name="Wheeler P.R."/>
            <person name="Parkhill J."/>
            <person name="Barrell B.G."/>
            <person name="Cole S.T."/>
            <person name="Gordon S.V."/>
            <person name="Hewinson R.G."/>
        </authorList>
    </citation>
    <scope>NUCLEOTIDE SEQUENCE [LARGE SCALE GENOMIC DNA]</scope>
    <source>
        <strain>ATCC BAA-935 / AF2122/97</strain>
    </source>
</reference>
<reference key="2">
    <citation type="journal article" date="2017" name="Genome Announc.">
        <title>Updated reference genome sequence and annotation of Mycobacterium bovis AF2122/97.</title>
        <authorList>
            <person name="Malone K.M."/>
            <person name="Farrell D."/>
            <person name="Stuber T.P."/>
            <person name="Schubert O.T."/>
            <person name="Aebersold R."/>
            <person name="Robbe-Austerman S."/>
            <person name="Gordon S.V."/>
        </authorList>
    </citation>
    <scope>NUCLEOTIDE SEQUENCE [LARGE SCALE GENOMIC DNA]</scope>
    <scope>GENOME REANNOTATION</scope>
    <source>
        <strain>ATCC BAA-935 / AF2122/97</strain>
    </source>
</reference>
<keyword id="KW-0963">Cytoplasm</keyword>
<keyword id="KW-0444">Lipid biosynthesis</keyword>
<keyword id="KW-0443">Lipid metabolism</keyword>
<keyword id="KW-0520">NAD</keyword>
<keyword id="KW-0521">NADP</keyword>
<keyword id="KW-0547">Nucleotide-binding</keyword>
<keyword id="KW-0560">Oxidoreductase</keyword>
<keyword id="KW-0594">Phospholipid biosynthesis</keyword>
<keyword id="KW-1208">Phospholipid metabolism</keyword>
<keyword id="KW-1185">Reference proteome</keyword>
<comment type="function">
    <text evidence="1">Catalyzes the reduction of the glycolytic intermediate dihydroxyacetone phosphate (DHAP) to sn-glycerol 3-phosphate (G3P), the key precursor for phospholipid synthesis.</text>
</comment>
<comment type="catalytic activity">
    <reaction evidence="1">
        <text>sn-glycerol 3-phosphate + NAD(+) = dihydroxyacetone phosphate + NADH + H(+)</text>
        <dbReference type="Rhea" id="RHEA:11092"/>
        <dbReference type="ChEBI" id="CHEBI:15378"/>
        <dbReference type="ChEBI" id="CHEBI:57540"/>
        <dbReference type="ChEBI" id="CHEBI:57597"/>
        <dbReference type="ChEBI" id="CHEBI:57642"/>
        <dbReference type="ChEBI" id="CHEBI:57945"/>
        <dbReference type="EC" id="1.1.1.94"/>
    </reaction>
    <physiologicalReaction direction="right-to-left" evidence="1">
        <dbReference type="Rhea" id="RHEA:11094"/>
    </physiologicalReaction>
</comment>
<comment type="catalytic activity">
    <reaction evidence="1">
        <text>sn-glycerol 3-phosphate + NADP(+) = dihydroxyacetone phosphate + NADPH + H(+)</text>
        <dbReference type="Rhea" id="RHEA:11096"/>
        <dbReference type="ChEBI" id="CHEBI:15378"/>
        <dbReference type="ChEBI" id="CHEBI:57597"/>
        <dbReference type="ChEBI" id="CHEBI:57642"/>
        <dbReference type="ChEBI" id="CHEBI:57783"/>
        <dbReference type="ChEBI" id="CHEBI:58349"/>
        <dbReference type="EC" id="1.1.1.94"/>
    </reaction>
    <physiologicalReaction direction="right-to-left" evidence="1">
        <dbReference type="Rhea" id="RHEA:11098"/>
    </physiologicalReaction>
</comment>
<comment type="pathway">
    <text evidence="1">Membrane lipid metabolism; glycerophospholipid metabolism.</text>
</comment>
<comment type="subcellular location">
    <subcellularLocation>
        <location evidence="1">Cytoplasm</location>
    </subcellularLocation>
</comment>
<comment type="similarity">
    <text evidence="1">Belongs to the NAD-dependent glycerol-3-phosphate dehydrogenase family.</text>
</comment>
<feature type="chain" id="PRO_0000137990" description="Glycerol-3-phosphate dehydrogenase [NAD(P)+] 1">
    <location>
        <begin position="1"/>
        <end position="341"/>
    </location>
</feature>
<feature type="active site" description="Proton acceptor" evidence="1">
    <location>
        <position position="195"/>
    </location>
</feature>
<feature type="binding site" evidence="1">
    <location>
        <position position="17"/>
    </location>
    <ligand>
        <name>NADPH</name>
        <dbReference type="ChEBI" id="CHEBI:57783"/>
    </ligand>
</feature>
<feature type="binding site" evidence="1">
    <location>
        <position position="18"/>
    </location>
    <ligand>
        <name>NADPH</name>
        <dbReference type="ChEBI" id="CHEBI:57783"/>
    </ligand>
</feature>
<feature type="binding site" evidence="1">
    <location>
        <position position="37"/>
    </location>
    <ligand>
        <name>NADPH</name>
        <dbReference type="ChEBI" id="CHEBI:57783"/>
    </ligand>
</feature>
<feature type="binding site" evidence="1">
    <location>
        <position position="112"/>
    </location>
    <ligand>
        <name>NADPH</name>
        <dbReference type="ChEBI" id="CHEBI:57783"/>
    </ligand>
</feature>
<feature type="binding site" evidence="1">
    <location>
        <position position="112"/>
    </location>
    <ligand>
        <name>sn-glycerol 3-phosphate</name>
        <dbReference type="ChEBI" id="CHEBI:57597"/>
    </ligand>
</feature>
<feature type="binding site" evidence="1">
    <location>
        <position position="140"/>
    </location>
    <ligand>
        <name>sn-glycerol 3-phosphate</name>
        <dbReference type="ChEBI" id="CHEBI:57597"/>
    </ligand>
</feature>
<feature type="binding site" evidence="1">
    <location>
        <position position="144"/>
    </location>
    <ligand>
        <name>NADPH</name>
        <dbReference type="ChEBI" id="CHEBI:57783"/>
    </ligand>
</feature>
<feature type="binding site" evidence="1">
    <location>
        <position position="195"/>
    </location>
    <ligand>
        <name>sn-glycerol 3-phosphate</name>
        <dbReference type="ChEBI" id="CHEBI:57597"/>
    </ligand>
</feature>
<feature type="binding site" evidence="1">
    <location>
        <position position="248"/>
    </location>
    <ligand>
        <name>sn-glycerol 3-phosphate</name>
        <dbReference type="ChEBI" id="CHEBI:57597"/>
    </ligand>
</feature>
<feature type="binding site" evidence="1">
    <location>
        <position position="258"/>
    </location>
    <ligand>
        <name>sn-glycerol 3-phosphate</name>
        <dbReference type="ChEBI" id="CHEBI:57597"/>
    </ligand>
</feature>
<feature type="binding site" evidence="1">
    <location>
        <position position="259"/>
    </location>
    <ligand>
        <name>NADPH</name>
        <dbReference type="ChEBI" id="CHEBI:57783"/>
    </ligand>
</feature>
<feature type="binding site" evidence="1">
    <location>
        <position position="259"/>
    </location>
    <ligand>
        <name>sn-glycerol 3-phosphate</name>
        <dbReference type="ChEBI" id="CHEBI:57597"/>
    </ligand>
</feature>
<feature type="binding site" evidence="1">
    <location>
        <position position="260"/>
    </location>
    <ligand>
        <name>sn-glycerol 3-phosphate</name>
        <dbReference type="ChEBI" id="CHEBI:57597"/>
    </ligand>
</feature>
<feature type="binding site" evidence="1">
    <location>
        <position position="283"/>
    </location>
    <ligand>
        <name>NADPH</name>
        <dbReference type="ChEBI" id="CHEBI:57783"/>
    </ligand>
</feature>
<feature type="binding site" evidence="1">
    <location>
        <position position="285"/>
    </location>
    <ligand>
        <name>NADPH</name>
        <dbReference type="ChEBI" id="CHEBI:57783"/>
    </ligand>
</feature>
<organism>
    <name type="scientific">Mycobacterium bovis (strain ATCC BAA-935 / AF2122/97)</name>
    <dbReference type="NCBI Taxonomy" id="233413"/>
    <lineage>
        <taxon>Bacteria</taxon>
        <taxon>Bacillati</taxon>
        <taxon>Actinomycetota</taxon>
        <taxon>Actinomycetes</taxon>
        <taxon>Mycobacteriales</taxon>
        <taxon>Mycobacteriaceae</taxon>
        <taxon>Mycobacterium</taxon>
        <taxon>Mycobacterium tuberculosis complex</taxon>
    </lineage>
</organism>
<name>GPDA1_MYCBO</name>
<gene>
    <name evidence="1" type="primary">gpsA1</name>
    <name type="synonym">gpdA1</name>
    <name type="ordered locus">BQ2027_MB0579C</name>
</gene>
<proteinExistence type="inferred from homology"/>
<evidence type="ECO:0000255" key="1">
    <source>
        <dbReference type="HAMAP-Rule" id="MF_00394"/>
    </source>
</evidence>
<dbReference type="EC" id="1.1.1.94" evidence="1"/>
<dbReference type="EMBL" id="LT708304">
    <property type="protein sequence ID" value="SIT99175.1"/>
    <property type="molecule type" value="Genomic_DNA"/>
</dbReference>
<dbReference type="RefSeq" id="NP_854239.1">
    <property type="nucleotide sequence ID" value="NC_002945.3"/>
</dbReference>
<dbReference type="RefSeq" id="WP_003900965.1">
    <property type="nucleotide sequence ID" value="NC_002945.4"/>
</dbReference>
<dbReference type="SMR" id="P64189"/>
<dbReference type="PATRIC" id="fig|233413.5.peg.627"/>
<dbReference type="UniPathway" id="UPA00940"/>
<dbReference type="Proteomes" id="UP000001419">
    <property type="component" value="Chromosome"/>
</dbReference>
<dbReference type="GO" id="GO:0005829">
    <property type="term" value="C:cytosol"/>
    <property type="evidence" value="ECO:0007669"/>
    <property type="project" value="TreeGrafter"/>
</dbReference>
<dbReference type="GO" id="GO:0047952">
    <property type="term" value="F:glycerol-3-phosphate dehydrogenase [NAD(P)+] activity"/>
    <property type="evidence" value="ECO:0007669"/>
    <property type="project" value="UniProtKB-UniRule"/>
</dbReference>
<dbReference type="GO" id="GO:0051287">
    <property type="term" value="F:NAD binding"/>
    <property type="evidence" value="ECO:0007669"/>
    <property type="project" value="InterPro"/>
</dbReference>
<dbReference type="GO" id="GO:0005975">
    <property type="term" value="P:carbohydrate metabolic process"/>
    <property type="evidence" value="ECO:0007669"/>
    <property type="project" value="InterPro"/>
</dbReference>
<dbReference type="GO" id="GO:0046167">
    <property type="term" value="P:glycerol-3-phosphate biosynthetic process"/>
    <property type="evidence" value="ECO:0007669"/>
    <property type="project" value="UniProtKB-UniRule"/>
</dbReference>
<dbReference type="GO" id="GO:0046168">
    <property type="term" value="P:glycerol-3-phosphate catabolic process"/>
    <property type="evidence" value="ECO:0007669"/>
    <property type="project" value="InterPro"/>
</dbReference>
<dbReference type="GO" id="GO:0006650">
    <property type="term" value="P:glycerophospholipid metabolic process"/>
    <property type="evidence" value="ECO:0007669"/>
    <property type="project" value="UniProtKB-UniRule"/>
</dbReference>
<dbReference type="GO" id="GO:0008654">
    <property type="term" value="P:phospholipid biosynthetic process"/>
    <property type="evidence" value="ECO:0007669"/>
    <property type="project" value="UniProtKB-KW"/>
</dbReference>
<dbReference type="FunFam" id="1.10.1040.10:FF:000037">
    <property type="entry name" value="Glycerol-3-phosphate dehydrogenase [NAD(P)+]"/>
    <property type="match status" value="1"/>
</dbReference>
<dbReference type="FunFam" id="3.40.50.720:FF:000384">
    <property type="entry name" value="Glycerol-3-phosphate dehydrogenase [NAD(P)+]"/>
    <property type="match status" value="1"/>
</dbReference>
<dbReference type="Gene3D" id="1.10.1040.10">
    <property type="entry name" value="N-(1-d-carboxylethyl)-l-norvaline Dehydrogenase, domain 2"/>
    <property type="match status" value="1"/>
</dbReference>
<dbReference type="Gene3D" id="3.40.50.720">
    <property type="entry name" value="NAD(P)-binding Rossmann-like Domain"/>
    <property type="match status" value="1"/>
</dbReference>
<dbReference type="HAMAP" id="MF_00394">
    <property type="entry name" value="NAD_Glyc3P_dehydrog"/>
    <property type="match status" value="1"/>
</dbReference>
<dbReference type="InterPro" id="IPR008927">
    <property type="entry name" value="6-PGluconate_DH-like_C_sf"/>
</dbReference>
<dbReference type="InterPro" id="IPR013328">
    <property type="entry name" value="6PGD_dom2"/>
</dbReference>
<dbReference type="InterPro" id="IPR006168">
    <property type="entry name" value="G3P_DH_NAD-dep"/>
</dbReference>
<dbReference type="InterPro" id="IPR006109">
    <property type="entry name" value="G3P_DH_NAD-dep_C"/>
</dbReference>
<dbReference type="InterPro" id="IPR011128">
    <property type="entry name" value="G3P_DH_NAD-dep_N"/>
</dbReference>
<dbReference type="InterPro" id="IPR036291">
    <property type="entry name" value="NAD(P)-bd_dom_sf"/>
</dbReference>
<dbReference type="NCBIfam" id="NF000940">
    <property type="entry name" value="PRK00094.1-2"/>
    <property type="match status" value="1"/>
</dbReference>
<dbReference type="NCBIfam" id="NF000942">
    <property type="entry name" value="PRK00094.1-4"/>
    <property type="match status" value="1"/>
</dbReference>
<dbReference type="NCBIfam" id="NF009098">
    <property type="entry name" value="PRK12439.1"/>
    <property type="match status" value="1"/>
</dbReference>
<dbReference type="PANTHER" id="PTHR11728">
    <property type="entry name" value="GLYCEROL-3-PHOSPHATE DEHYDROGENASE"/>
    <property type="match status" value="1"/>
</dbReference>
<dbReference type="PANTHER" id="PTHR11728:SF1">
    <property type="entry name" value="GLYCEROL-3-PHOSPHATE DEHYDROGENASE [NAD(+)] 2, CHLOROPLASTIC"/>
    <property type="match status" value="1"/>
</dbReference>
<dbReference type="Pfam" id="PF07479">
    <property type="entry name" value="NAD_Gly3P_dh_C"/>
    <property type="match status" value="1"/>
</dbReference>
<dbReference type="Pfam" id="PF01210">
    <property type="entry name" value="NAD_Gly3P_dh_N"/>
    <property type="match status" value="1"/>
</dbReference>
<dbReference type="PIRSF" id="PIRSF000114">
    <property type="entry name" value="Glycerol-3-P_dh"/>
    <property type="match status" value="1"/>
</dbReference>
<dbReference type="PRINTS" id="PR00077">
    <property type="entry name" value="GPDHDRGNASE"/>
</dbReference>
<dbReference type="SUPFAM" id="SSF48179">
    <property type="entry name" value="6-phosphogluconate dehydrogenase C-terminal domain-like"/>
    <property type="match status" value="1"/>
</dbReference>
<dbReference type="SUPFAM" id="SSF51735">
    <property type="entry name" value="NAD(P)-binding Rossmann-fold domains"/>
    <property type="match status" value="1"/>
</dbReference>
<dbReference type="PROSITE" id="PS00957">
    <property type="entry name" value="NAD_G3PDH"/>
    <property type="match status" value="1"/>
</dbReference>
<accession>P64189</accession>
<accession>A0A1R3XW89</accession>
<accession>O53761</accession>
<accession>X2BFG8</accession>